<proteinExistence type="evidence at transcript level"/>
<name>CTU1_DANRE</name>
<gene>
    <name type="primary">ctu1</name>
    <name type="synonym">atpbd3</name>
    <name type="synonym">ncs6</name>
    <name type="ORF">zgc:55395</name>
</gene>
<organism>
    <name type="scientific">Danio rerio</name>
    <name type="common">Zebrafish</name>
    <name type="synonym">Brachydanio rerio</name>
    <dbReference type="NCBI Taxonomy" id="7955"/>
    <lineage>
        <taxon>Eukaryota</taxon>
        <taxon>Metazoa</taxon>
        <taxon>Chordata</taxon>
        <taxon>Craniata</taxon>
        <taxon>Vertebrata</taxon>
        <taxon>Euteleostomi</taxon>
        <taxon>Actinopterygii</taxon>
        <taxon>Neopterygii</taxon>
        <taxon>Teleostei</taxon>
        <taxon>Ostariophysi</taxon>
        <taxon>Cypriniformes</taxon>
        <taxon>Danionidae</taxon>
        <taxon>Danioninae</taxon>
        <taxon>Danio</taxon>
    </lineage>
</organism>
<feature type="chain" id="PRO_0000282393" description="Cytoplasmic tRNA 2-thiolation protein 1">
    <location>
        <begin position="1"/>
        <end position="343"/>
    </location>
</feature>
<feature type="sequence conflict" description="In Ref. 1; AAI54794." evidence="2" ref="1">
    <original>M</original>
    <variation>I</variation>
    <location>
        <position position="70"/>
    </location>
</feature>
<keyword id="KW-0963">Cytoplasm</keyword>
<keyword id="KW-1185">Reference proteome</keyword>
<keyword id="KW-0694">RNA-binding</keyword>
<keyword id="KW-0808">Transferase</keyword>
<keyword id="KW-0819">tRNA processing</keyword>
<keyword id="KW-0820">tRNA-binding</keyword>
<comment type="function">
    <text evidence="1">Plays a central role in 2-thiolation of mcm(5)S(2)U at tRNA wobble positions of tRNA(Lys), tRNA(Glu) and tRNA(Gln). Directly binds tRNAs and probably acts by catalyzing adenylation of tRNAs, an intermediate required for 2-thiolation. It is unclear whether it acts as a sulfurtransferase that transfers sulfur from thiocarboxylated urm1 onto the uridine of tRNAs at wobble position.</text>
</comment>
<comment type="pathway">
    <text evidence="1">tRNA modification; 5-methoxycarbonylmethyl-2-thiouridine-tRNA biosynthesis.</text>
</comment>
<comment type="subcellular location">
    <subcellularLocation>
        <location evidence="1">Cytoplasm</location>
    </subcellularLocation>
</comment>
<comment type="similarity">
    <text evidence="1">Belongs to the TtcA family. CTU1/NCS6/ATPBD3 subfamily.</text>
</comment>
<sequence length="343" mass="38401">MPVQCSNCEQKRAVLKRPKTGHSLCKDCFFWAFEEEIHQTITSAGLFNRGETVAIGASGGKDSTVLAHVMKLLNERYDYGLKLLLLSVDEGITGYRDDSLETVKRNQQQYELPLKIVSYEELYGWTMDAIVKQVGLKNNCTFCGVFRRQALDRGAMMLNVDKICTGHNADDVAETVLMNVLRGDIARLRRCTAISTSSEGDGAIPRCKPLKYAYEKEIVLYAYFKKLDYFSTECIYSPNAYRGHARAFLKDLESVRPSAIIDVIHSGETLSVKEGVKMPVQGTCSRCGYISSQALCKSCVLLEGLNRGLPKLGIGKHHRLHGKILAQEPLTEQEERKLKAVDF</sequence>
<reference key="1">
    <citation type="submission" date="2003-01" db="EMBL/GenBank/DDBJ databases">
        <authorList>
            <consortium name="NIH - Zebrafish Gene Collection (ZGC) project"/>
        </authorList>
    </citation>
    <scope>NUCLEOTIDE SEQUENCE [LARGE SCALE MRNA]</scope>
    <source>
        <strain>AB</strain>
        <tissue>Embryo</tissue>
    </source>
</reference>
<accession>Q803X1</accession>
<accession>A8WGP6</accession>
<accession>A9JRT6</accession>
<evidence type="ECO:0000255" key="1">
    <source>
        <dbReference type="HAMAP-Rule" id="MF_03053"/>
    </source>
</evidence>
<evidence type="ECO:0000305" key="2"/>
<dbReference type="EC" id="2.7.7.-" evidence="1"/>
<dbReference type="EMBL" id="BC044158">
    <property type="protein sequence ID" value="AAH44158.1"/>
    <property type="molecule type" value="mRNA"/>
</dbReference>
<dbReference type="EMBL" id="BC155784">
    <property type="protein sequence ID" value="AAI55785.1"/>
    <property type="molecule type" value="mRNA"/>
</dbReference>
<dbReference type="EMBL" id="BC154793">
    <property type="protein sequence ID" value="AAI54794.1"/>
    <property type="molecule type" value="mRNA"/>
</dbReference>
<dbReference type="RefSeq" id="NP_956424.1">
    <property type="nucleotide sequence ID" value="NM_200130.1"/>
</dbReference>
<dbReference type="SMR" id="Q803X1"/>
<dbReference type="FunCoup" id="Q803X1">
    <property type="interactions" value="1086"/>
</dbReference>
<dbReference type="STRING" id="7955.ENSDARP00000009303"/>
<dbReference type="PaxDb" id="7955-ENSDARP00000009303"/>
<dbReference type="Ensembl" id="ENSDART00000017850">
    <property type="protein sequence ID" value="ENSDARP00000009303"/>
    <property type="gene ID" value="ENSDARG00000020986"/>
</dbReference>
<dbReference type="Ensembl" id="ENSDART00000164426">
    <property type="protein sequence ID" value="ENSDARP00000134794"/>
    <property type="gene ID" value="ENSDARG00000020986"/>
</dbReference>
<dbReference type="GeneID" id="393098"/>
<dbReference type="KEGG" id="dre:393098"/>
<dbReference type="AGR" id="ZFIN:ZDB-GENE-040426-704"/>
<dbReference type="CTD" id="90353"/>
<dbReference type="ZFIN" id="ZDB-GENE-040426-704">
    <property type="gene designation" value="ctu1"/>
</dbReference>
<dbReference type="eggNOG" id="KOG2840">
    <property type="taxonomic scope" value="Eukaryota"/>
</dbReference>
<dbReference type="HOGENOM" id="CLU_026481_1_2_1"/>
<dbReference type="InParanoid" id="Q803X1"/>
<dbReference type="OMA" id="KPVRGIC"/>
<dbReference type="OrthoDB" id="427096at2759"/>
<dbReference type="PhylomeDB" id="Q803X1"/>
<dbReference type="TreeFam" id="TF352405"/>
<dbReference type="UniPathway" id="UPA00988"/>
<dbReference type="PRO" id="PR:Q803X1"/>
<dbReference type="Proteomes" id="UP000000437">
    <property type="component" value="Chromosome 8"/>
</dbReference>
<dbReference type="Bgee" id="ENSDARG00000020986">
    <property type="expression patterns" value="Expressed in mature ovarian follicle and 25 other cell types or tissues"/>
</dbReference>
<dbReference type="ExpressionAtlas" id="Q803X1">
    <property type="expression patterns" value="baseline and differential"/>
</dbReference>
<dbReference type="GO" id="GO:0005829">
    <property type="term" value="C:cytosol"/>
    <property type="evidence" value="ECO:0000250"/>
    <property type="project" value="UniProtKB"/>
</dbReference>
<dbReference type="GO" id="GO:0002144">
    <property type="term" value="C:cytosolic tRNA wobble base thiouridylase complex"/>
    <property type="evidence" value="ECO:0000318"/>
    <property type="project" value="GO_Central"/>
</dbReference>
<dbReference type="GO" id="GO:0016779">
    <property type="term" value="F:nucleotidyltransferase activity"/>
    <property type="evidence" value="ECO:0007669"/>
    <property type="project" value="UniProtKB-UniRule"/>
</dbReference>
<dbReference type="GO" id="GO:0000049">
    <property type="term" value="F:tRNA binding"/>
    <property type="evidence" value="ECO:0000250"/>
    <property type="project" value="UniProtKB"/>
</dbReference>
<dbReference type="GO" id="GO:0032447">
    <property type="term" value="P:protein urmylation"/>
    <property type="evidence" value="ECO:0007669"/>
    <property type="project" value="UniProtKB-UniRule"/>
</dbReference>
<dbReference type="GO" id="GO:0034227">
    <property type="term" value="P:tRNA thio-modification"/>
    <property type="evidence" value="ECO:0000250"/>
    <property type="project" value="UniProtKB"/>
</dbReference>
<dbReference type="GO" id="GO:0002143">
    <property type="term" value="P:tRNA wobble position uridine thiolation"/>
    <property type="evidence" value="ECO:0000318"/>
    <property type="project" value="GO_Central"/>
</dbReference>
<dbReference type="GO" id="GO:0002098">
    <property type="term" value="P:tRNA wobble uridine modification"/>
    <property type="evidence" value="ECO:0000250"/>
    <property type="project" value="UniProtKB"/>
</dbReference>
<dbReference type="CDD" id="cd01713">
    <property type="entry name" value="CTU1-like"/>
    <property type="match status" value="1"/>
</dbReference>
<dbReference type="FunFam" id="3.40.50.620:FF:000054">
    <property type="entry name" value="Cytoplasmic tRNA 2-thiolation protein 1"/>
    <property type="match status" value="1"/>
</dbReference>
<dbReference type="Gene3D" id="3.40.50.620">
    <property type="entry name" value="HUPs"/>
    <property type="match status" value="1"/>
</dbReference>
<dbReference type="HAMAP" id="MF_03053">
    <property type="entry name" value="CTU1"/>
    <property type="match status" value="1"/>
</dbReference>
<dbReference type="InterPro" id="IPR056369">
    <property type="entry name" value="CTU1-like_ATP-bd"/>
</dbReference>
<dbReference type="InterPro" id="IPR032442">
    <property type="entry name" value="CTU1_C"/>
</dbReference>
<dbReference type="InterPro" id="IPR000541">
    <property type="entry name" value="Ncs6/Tuc1/Ctu1"/>
</dbReference>
<dbReference type="InterPro" id="IPR014729">
    <property type="entry name" value="Rossmann-like_a/b/a_fold"/>
</dbReference>
<dbReference type="InterPro" id="IPR011063">
    <property type="entry name" value="TilS/TtcA_N"/>
</dbReference>
<dbReference type="InterPro" id="IPR035107">
    <property type="entry name" value="tRNA_thiolation_TtcA_Ctu1"/>
</dbReference>
<dbReference type="InterPro" id="IPR020554">
    <property type="entry name" value="UPF0021_CS"/>
</dbReference>
<dbReference type="NCBIfam" id="TIGR00269">
    <property type="entry name" value="TIGR00269 family protein"/>
    <property type="match status" value="1"/>
</dbReference>
<dbReference type="PANTHER" id="PTHR11807">
    <property type="entry name" value="ATPASES OF THE PP SUPERFAMILY-RELATED"/>
    <property type="match status" value="1"/>
</dbReference>
<dbReference type="PANTHER" id="PTHR11807:SF12">
    <property type="entry name" value="CYTOPLASMIC TRNA 2-THIOLATION PROTEIN 1"/>
    <property type="match status" value="1"/>
</dbReference>
<dbReference type="Pfam" id="PF01171">
    <property type="entry name" value="ATP_bind_3"/>
    <property type="match status" value="1"/>
</dbReference>
<dbReference type="Pfam" id="PF16503">
    <property type="entry name" value="zn-ribbon_14"/>
    <property type="match status" value="1"/>
</dbReference>
<dbReference type="PIRSF" id="PIRSF004976">
    <property type="entry name" value="ATPase_YdaO"/>
    <property type="match status" value="1"/>
</dbReference>
<dbReference type="SUPFAM" id="SSF52402">
    <property type="entry name" value="Adenine nucleotide alpha hydrolases-like"/>
    <property type="match status" value="1"/>
</dbReference>
<dbReference type="PROSITE" id="PS01263">
    <property type="entry name" value="UPF0021"/>
    <property type="match status" value="1"/>
</dbReference>
<protein>
    <recommendedName>
        <fullName evidence="1">Cytoplasmic tRNA 2-thiolation protein 1</fullName>
        <ecNumber evidence="1">2.7.7.-</ecNumber>
    </recommendedName>
    <alternativeName>
        <fullName evidence="1">ATP-binding domain-containing protein 3</fullName>
    </alternativeName>
    <alternativeName>
        <fullName evidence="1">Cytoplasmic tRNA adenylyltransferase 1</fullName>
    </alternativeName>
</protein>